<accession>Q329P2</accession>
<organism>
    <name type="scientific">Shigella dysenteriae serotype 1 (strain Sd197)</name>
    <dbReference type="NCBI Taxonomy" id="300267"/>
    <lineage>
        <taxon>Bacteria</taxon>
        <taxon>Pseudomonadati</taxon>
        <taxon>Pseudomonadota</taxon>
        <taxon>Gammaproteobacteria</taxon>
        <taxon>Enterobacterales</taxon>
        <taxon>Enterobacteriaceae</taxon>
        <taxon>Shigella</taxon>
    </lineage>
</organism>
<feature type="chain" id="PRO_0000212203" description="2,3-bisphosphoglycerate-independent phosphoglycerate mutase">
    <location>
        <begin position="1"/>
        <end position="514"/>
    </location>
</feature>
<feature type="active site" description="Phosphoserine intermediate" evidence="1">
    <location>
        <position position="64"/>
    </location>
</feature>
<feature type="binding site" evidence="1">
    <location>
        <position position="14"/>
    </location>
    <ligand>
        <name>Mn(2+)</name>
        <dbReference type="ChEBI" id="CHEBI:29035"/>
        <label>2</label>
    </ligand>
</feature>
<feature type="binding site" evidence="1">
    <location>
        <position position="64"/>
    </location>
    <ligand>
        <name>Mn(2+)</name>
        <dbReference type="ChEBI" id="CHEBI:29035"/>
        <label>2</label>
    </ligand>
</feature>
<feature type="binding site" evidence="1">
    <location>
        <position position="125"/>
    </location>
    <ligand>
        <name>substrate</name>
    </ligand>
</feature>
<feature type="binding site" evidence="1">
    <location>
        <begin position="155"/>
        <end position="156"/>
    </location>
    <ligand>
        <name>substrate</name>
    </ligand>
</feature>
<feature type="binding site" evidence="1">
    <location>
        <position position="187"/>
    </location>
    <ligand>
        <name>substrate</name>
    </ligand>
</feature>
<feature type="binding site" evidence="1">
    <location>
        <position position="193"/>
    </location>
    <ligand>
        <name>substrate</name>
    </ligand>
</feature>
<feature type="binding site" evidence="1">
    <location>
        <begin position="263"/>
        <end position="266"/>
    </location>
    <ligand>
        <name>substrate</name>
    </ligand>
</feature>
<feature type="binding site" evidence="1">
    <location>
        <position position="336"/>
    </location>
    <ligand>
        <name>substrate</name>
    </ligand>
</feature>
<feature type="binding site" evidence="1">
    <location>
        <position position="403"/>
    </location>
    <ligand>
        <name>Mn(2+)</name>
        <dbReference type="ChEBI" id="CHEBI:29035"/>
        <label>1</label>
    </ligand>
</feature>
<feature type="binding site" evidence="1">
    <location>
        <position position="407"/>
    </location>
    <ligand>
        <name>Mn(2+)</name>
        <dbReference type="ChEBI" id="CHEBI:29035"/>
        <label>1</label>
    </ligand>
</feature>
<feature type="binding site" evidence="1">
    <location>
        <position position="444"/>
    </location>
    <ligand>
        <name>Mn(2+)</name>
        <dbReference type="ChEBI" id="CHEBI:29035"/>
        <label>2</label>
    </ligand>
</feature>
<feature type="binding site" evidence="1">
    <location>
        <position position="445"/>
    </location>
    <ligand>
        <name>Mn(2+)</name>
        <dbReference type="ChEBI" id="CHEBI:29035"/>
        <label>2</label>
    </ligand>
</feature>
<feature type="binding site" evidence="1">
    <location>
        <position position="463"/>
    </location>
    <ligand>
        <name>Mn(2+)</name>
        <dbReference type="ChEBI" id="CHEBI:29035"/>
        <label>1</label>
    </ligand>
</feature>
<name>GPMI_SHIDS</name>
<comment type="function">
    <text evidence="1">Catalyzes the interconversion of 2-phosphoglycerate and 3-phosphoglycerate.</text>
</comment>
<comment type="catalytic activity">
    <reaction evidence="1">
        <text>(2R)-2-phosphoglycerate = (2R)-3-phosphoglycerate</text>
        <dbReference type="Rhea" id="RHEA:15901"/>
        <dbReference type="ChEBI" id="CHEBI:58272"/>
        <dbReference type="ChEBI" id="CHEBI:58289"/>
        <dbReference type="EC" id="5.4.2.12"/>
    </reaction>
</comment>
<comment type="cofactor">
    <cofactor evidence="1">
        <name>Mn(2+)</name>
        <dbReference type="ChEBI" id="CHEBI:29035"/>
    </cofactor>
    <text evidence="1">Binds 2 manganese ions per subunit.</text>
</comment>
<comment type="pathway">
    <text evidence="1">Carbohydrate degradation; glycolysis; pyruvate from D-glyceraldehyde 3-phosphate: step 3/5.</text>
</comment>
<comment type="subunit">
    <text evidence="1">Monomer.</text>
</comment>
<comment type="similarity">
    <text evidence="1">Belongs to the BPG-independent phosphoglycerate mutase family.</text>
</comment>
<proteinExistence type="inferred from homology"/>
<dbReference type="EC" id="5.4.2.12" evidence="1"/>
<dbReference type="EMBL" id="CP000034">
    <property type="protein sequence ID" value="ABB63963.1"/>
    <property type="molecule type" value="Genomic_DNA"/>
</dbReference>
<dbReference type="RefSeq" id="WP_005016722.1">
    <property type="nucleotide sequence ID" value="NC_007606.1"/>
</dbReference>
<dbReference type="RefSeq" id="YP_405454.1">
    <property type="nucleotide sequence ID" value="NC_007606.1"/>
</dbReference>
<dbReference type="SMR" id="Q329P2"/>
<dbReference type="STRING" id="300267.SDY_4045"/>
<dbReference type="EnsemblBacteria" id="ABB63963">
    <property type="protein sequence ID" value="ABB63963"/>
    <property type="gene ID" value="SDY_4045"/>
</dbReference>
<dbReference type="KEGG" id="sdy:SDY_4045"/>
<dbReference type="PATRIC" id="fig|300267.13.peg.4761"/>
<dbReference type="HOGENOM" id="CLU_026099_2_0_6"/>
<dbReference type="UniPathway" id="UPA00109">
    <property type="reaction ID" value="UER00186"/>
</dbReference>
<dbReference type="Proteomes" id="UP000002716">
    <property type="component" value="Chromosome"/>
</dbReference>
<dbReference type="GO" id="GO:0005829">
    <property type="term" value="C:cytosol"/>
    <property type="evidence" value="ECO:0007669"/>
    <property type="project" value="TreeGrafter"/>
</dbReference>
<dbReference type="GO" id="GO:0030145">
    <property type="term" value="F:manganese ion binding"/>
    <property type="evidence" value="ECO:0007669"/>
    <property type="project" value="UniProtKB-UniRule"/>
</dbReference>
<dbReference type="GO" id="GO:0004619">
    <property type="term" value="F:phosphoglycerate mutase activity"/>
    <property type="evidence" value="ECO:0007669"/>
    <property type="project" value="UniProtKB-EC"/>
</dbReference>
<dbReference type="GO" id="GO:0006007">
    <property type="term" value="P:glucose catabolic process"/>
    <property type="evidence" value="ECO:0007669"/>
    <property type="project" value="InterPro"/>
</dbReference>
<dbReference type="GO" id="GO:0006096">
    <property type="term" value="P:glycolytic process"/>
    <property type="evidence" value="ECO:0007669"/>
    <property type="project" value="UniProtKB-UniRule"/>
</dbReference>
<dbReference type="CDD" id="cd16010">
    <property type="entry name" value="iPGM"/>
    <property type="match status" value="1"/>
</dbReference>
<dbReference type="FunFam" id="3.40.1450.10:FF:000001">
    <property type="entry name" value="2,3-bisphosphoglycerate-independent phosphoglycerate mutase"/>
    <property type="match status" value="1"/>
</dbReference>
<dbReference type="FunFam" id="3.40.720.10:FF:000001">
    <property type="entry name" value="2,3-bisphosphoglycerate-independent phosphoglycerate mutase"/>
    <property type="match status" value="1"/>
</dbReference>
<dbReference type="Gene3D" id="3.40.720.10">
    <property type="entry name" value="Alkaline Phosphatase, subunit A"/>
    <property type="match status" value="1"/>
</dbReference>
<dbReference type="Gene3D" id="3.40.1450.10">
    <property type="entry name" value="BPG-independent phosphoglycerate mutase, domain B"/>
    <property type="match status" value="1"/>
</dbReference>
<dbReference type="HAMAP" id="MF_01038">
    <property type="entry name" value="GpmI"/>
    <property type="match status" value="1"/>
</dbReference>
<dbReference type="InterPro" id="IPR017850">
    <property type="entry name" value="Alkaline_phosphatase_core_sf"/>
</dbReference>
<dbReference type="InterPro" id="IPR011258">
    <property type="entry name" value="BPG-indep_PGM_N"/>
</dbReference>
<dbReference type="InterPro" id="IPR006124">
    <property type="entry name" value="Metalloenzyme"/>
</dbReference>
<dbReference type="InterPro" id="IPR036646">
    <property type="entry name" value="PGAM_B_sf"/>
</dbReference>
<dbReference type="InterPro" id="IPR005995">
    <property type="entry name" value="Pgm_bpd_ind"/>
</dbReference>
<dbReference type="NCBIfam" id="TIGR01307">
    <property type="entry name" value="pgm_bpd_ind"/>
    <property type="match status" value="1"/>
</dbReference>
<dbReference type="NCBIfam" id="NF003897">
    <property type="entry name" value="PRK05434.1-5"/>
    <property type="match status" value="1"/>
</dbReference>
<dbReference type="PANTHER" id="PTHR31637">
    <property type="entry name" value="2,3-BISPHOSPHOGLYCERATE-INDEPENDENT PHOSPHOGLYCERATE MUTASE"/>
    <property type="match status" value="1"/>
</dbReference>
<dbReference type="PANTHER" id="PTHR31637:SF0">
    <property type="entry name" value="2,3-BISPHOSPHOGLYCERATE-INDEPENDENT PHOSPHOGLYCERATE MUTASE"/>
    <property type="match status" value="1"/>
</dbReference>
<dbReference type="Pfam" id="PF06415">
    <property type="entry name" value="iPGM_N"/>
    <property type="match status" value="1"/>
</dbReference>
<dbReference type="Pfam" id="PF01676">
    <property type="entry name" value="Metalloenzyme"/>
    <property type="match status" value="1"/>
</dbReference>
<dbReference type="PIRSF" id="PIRSF001492">
    <property type="entry name" value="IPGAM"/>
    <property type="match status" value="1"/>
</dbReference>
<dbReference type="SUPFAM" id="SSF64158">
    <property type="entry name" value="2,3-Bisphosphoglycerate-independent phosphoglycerate mutase, substrate-binding domain"/>
    <property type="match status" value="1"/>
</dbReference>
<dbReference type="SUPFAM" id="SSF53649">
    <property type="entry name" value="Alkaline phosphatase-like"/>
    <property type="match status" value="1"/>
</dbReference>
<reference key="1">
    <citation type="journal article" date="2005" name="Nucleic Acids Res.">
        <title>Genome dynamics and diversity of Shigella species, the etiologic agents of bacillary dysentery.</title>
        <authorList>
            <person name="Yang F."/>
            <person name="Yang J."/>
            <person name="Zhang X."/>
            <person name="Chen L."/>
            <person name="Jiang Y."/>
            <person name="Yan Y."/>
            <person name="Tang X."/>
            <person name="Wang J."/>
            <person name="Xiong Z."/>
            <person name="Dong J."/>
            <person name="Xue Y."/>
            <person name="Zhu Y."/>
            <person name="Xu X."/>
            <person name="Sun L."/>
            <person name="Chen S."/>
            <person name="Nie H."/>
            <person name="Peng J."/>
            <person name="Xu J."/>
            <person name="Wang Y."/>
            <person name="Yuan Z."/>
            <person name="Wen Y."/>
            <person name="Yao Z."/>
            <person name="Shen Y."/>
            <person name="Qiang B."/>
            <person name="Hou Y."/>
            <person name="Yu J."/>
            <person name="Jin Q."/>
        </authorList>
    </citation>
    <scope>NUCLEOTIDE SEQUENCE [LARGE SCALE GENOMIC DNA]</scope>
    <source>
        <strain>Sd197</strain>
    </source>
</reference>
<evidence type="ECO:0000255" key="1">
    <source>
        <dbReference type="HAMAP-Rule" id="MF_01038"/>
    </source>
</evidence>
<keyword id="KW-0324">Glycolysis</keyword>
<keyword id="KW-0413">Isomerase</keyword>
<keyword id="KW-0464">Manganese</keyword>
<keyword id="KW-0479">Metal-binding</keyword>
<keyword id="KW-1185">Reference proteome</keyword>
<gene>
    <name evidence="1" type="primary">gpmI</name>
    <name type="ordered locus">SDY_4045</name>
</gene>
<protein>
    <recommendedName>
        <fullName evidence="1">2,3-bisphosphoglycerate-independent phosphoglycerate mutase</fullName>
        <shortName evidence="1">BPG-independent PGAM</shortName>
        <shortName evidence="1">Phosphoglyceromutase</shortName>
        <shortName evidence="1">iPGM</shortName>
        <ecNumber evidence="1">5.4.2.12</ecNumber>
    </recommendedName>
</protein>
<sequence length="514" mass="56155">MSVSKKPMVLVILDGYGYREEQQDNAIFSAKTPVMDALWANRPHTLIDASGLEVGLPDRQMGNSEVGHVNLGAGRIVYQDLTRLDVEIKDRVFFANPVLTGAVDKAKSAGKAVHIMGLLSAGGVHSHEDHIMAMVELAAERGAEKIYLHAFLDGRDTPPRSAESSLKKFEEKFAALGKGRVASIIGRYYAMDRDNRWDRVEKAYDLLTLAQGEFQADTAVAGLQAAYARDENDEFVKATVIRAEGQPDAAMEDGDALIFMNFRADRAREITRAFVNADFDGFARKKVVNVDFVMLTEYAADIKTAVAYPPASLVNTFGEWMAKNDKTQLRISETEKYAHVTFFFNGGVEESFKGEDRILINSPKVATYDLQPEMSSAELTEKLVAAIKSGKYDTIICNYPNGDMVGHTGVMEAAVKAVEALDHCVDEVAKAVESVGGQLLITADHGNAEQMRDPATGQAHTAHTNLPVPLIYVGDKNVKAVEGGKLSDIAPTMLSLMGMEIPQEMTGKPLFIVE</sequence>